<proteinExistence type="inferred from homology"/>
<keyword id="KW-0131">Cell cycle</keyword>
<keyword id="KW-0132">Cell division</keyword>
<keyword id="KW-0238">DNA-binding</keyword>
<gene>
    <name evidence="1" type="primary">whiA</name>
    <name type="ordered locus">RBAM_031970</name>
</gene>
<sequence>MSFASETKKELTNLEVKDCCAKAELSALIRMNGSLSFSNRHLVLDVQTENAAIARRIYTLLKKQYDVSVELLVRKKMRLKKNNVYIVRFSENAKLILEELKILGENFVFERNISEELVAKRCCKRSYMRGAFLAGGSVNNPETSSYHLEIFSLYKEHNDSLCALLNEFHLNSKTLERKKGYITYLKEAEKITEFLNVIGAHNSLLRFEDVRIVRDMRNSVNRLVNCETANLNKTIGASLRQVENIKYIDERIGLEALPEKLREIAQLRIDYQEVTLKELGEMVASGKISKSGINHRLRKLDEIAEQLRTGQSITLK</sequence>
<reference key="1">
    <citation type="journal article" date="2007" name="Nat. Biotechnol.">
        <title>Comparative analysis of the complete genome sequence of the plant growth-promoting bacterium Bacillus amyloliquefaciens FZB42.</title>
        <authorList>
            <person name="Chen X.H."/>
            <person name="Koumoutsi A."/>
            <person name="Scholz R."/>
            <person name="Eisenreich A."/>
            <person name="Schneider K."/>
            <person name="Heinemeyer I."/>
            <person name="Morgenstern B."/>
            <person name="Voss B."/>
            <person name="Hess W.R."/>
            <person name="Reva O."/>
            <person name="Junge H."/>
            <person name="Voigt B."/>
            <person name="Jungblut P.R."/>
            <person name="Vater J."/>
            <person name="Suessmuth R."/>
            <person name="Liesegang H."/>
            <person name="Strittmatter A."/>
            <person name="Gottschalk G."/>
            <person name="Borriss R."/>
        </authorList>
    </citation>
    <scope>NUCLEOTIDE SEQUENCE [LARGE SCALE GENOMIC DNA]</scope>
    <source>
        <strain>DSM 23117 / BGSC 10A6 / LMG 26770 / FZB42</strain>
    </source>
</reference>
<organism>
    <name type="scientific">Bacillus velezensis (strain DSM 23117 / BGSC 10A6 / LMG 26770 / FZB42)</name>
    <name type="common">Bacillus amyloliquefaciens subsp. plantarum</name>
    <dbReference type="NCBI Taxonomy" id="326423"/>
    <lineage>
        <taxon>Bacteria</taxon>
        <taxon>Bacillati</taxon>
        <taxon>Bacillota</taxon>
        <taxon>Bacilli</taxon>
        <taxon>Bacillales</taxon>
        <taxon>Bacillaceae</taxon>
        <taxon>Bacillus</taxon>
        <taxon>Bacillus amyloliquefaciens group</taxon>
    </lineage>
</organism>
<accession>A7Z951</accession>
<protein>
    <recommendedName>
        <fullName evidence="1">Probable cell division protein WhiA</fullName>
    </recommendedName>
</protein>
<feature type="chain" id="PRO_0000376427" description="Probable cell division protein WhiA">
    <location>
        <begin position="1"/>
        <end position="316"/>
    </location>
</feature>
<feature type="DNA-binding region" description="H-T-H motif" evidence="1">
    <location>
        <begin position="275"/>
        <end position="309"/>
    </location>
</feature>
<evidence type="ECO:0000255" key="1">
    <source>
        <dbReference type="HAMAP-Rule" id="MF_01420"/>
    </source>
</evidence>
<name>WHIA_BACVZ</name>
<dbReference type="EMBL" id="CP000560">
    <property type="protein sequence ID" value="ABS75527.1"/>
    <property type="molecule type" value="Genomic_DNA"/>
</dbReference>
<dbReference type="RefSeq" id="WP_007407421.1">
    <property type="nucleotide sequence ID" value="NC_009725.2"/>
</dbReference>
<dbReference type="SMR" id="A7Z951"/>
<dbReference type="GeneID" id="93082342"/>
<dbReference type="KEGG" id="bay:RBAM_031970"/>
<dbReference type="HOGENOM" id="CLU_053282_0_0_9"/>
<dbReference type="Proteomes" id="UP000001120">
    <property type="component" value="Chromosome"/>
</dbReference>
<dbReference type="GO" id="GO:0003677">
    <property type="term" value="F:DNA binding"/>
    <property type="evidence" value="ECO:0007669"/>
    <property type="project" value="UniProtKB-UniRule"/>
</dbReference>
<dbReference type="GO" id="GO:0051301">
    <property type="term" value="P:cell division"/>
    <property type="evidence" value="ECO:0007669"/>
    <property type="project" value="UniProtKB-UniRule"/>
</dbReference>
<dbReference type="GO" id="GO:0043937">
    <property type="term" value="P:regulation of sporulation"/>
    <property type="evidence" value="ECO:0007669"/>
    <property type="project" value="InterPro"/>
</dbReference>
<dbReference type="FunFam" id="3.10.28.10:FF:000002">
    <property type="entry name" value="Probable cell division protein WhiA"/>
    <property type="match status" value="1"/>
</dbReference>
<dbReference type="Gene3D" id="3.10.28.10">
    <property type="entry name" value="Homing endonucleases"/>
    <property type="match status" value="1"/>
</dbReference>
<dbReference type="HAMAP" id="MF_01420">
    <property type="entry name" value="HTH_type_WhiA"/>
    <property type="match status" value="1"/>
</dbReference>
<dbReference type="InterPro" id="IPR027434">
    <property type="entry name" value="Homing_endonucl"/>
</dbReference>
<dbReference type="InterPro" id="IPR018478">
    <property type="entry name" value="Sporu_reg_WhiA_N_dom"/>
</dbReference>
<dbReference type="InterPro" id="IPR003802">
    <property type="entry name" value="Sporulation_regulator_WhiA"/>
</dbReference>
<dbReference type="InterPro" id="IPR023054">
    <property type="entry name" value="Sporulation_regulator_WhiA_C"/>
</dbReference>
<dbReference type="InterPro" id="IPR039518">
    <property type="entry name" value="WhiA_LAGLIDADG_dom"/>
</dbReference>
<dbReference type="NCBIfam" id="TIGR00647">
    <property type="entry name" value="DNA_bind_WhiA"/>
    <property type="match status" value="1"/>
</dbReference>
<dbReference type="PANTHER" id="PTHR37307">
    <property type="entry name" value="CELL DIVISION PROTEIN WHIA-RELATED"/>
    <property type="match status" value="1"/>
</dbReference>
<dbReference type="PANTHER" id="PTHR37307:SF1">
    <property type="entry name" value="CELL DIVISION PROTEIN WHIA-RELATED"/>
    <property type="match status" value="1"/>
</dbReference>
<dbReference type="Pfam" id="PF02650">
    <property type="entry name" value="HTH_WhiA"/>
    <property type="match status" value="1"/>
</dbReference>
<dbReference type="Pfam" id="PF14527">
    <property type="entry name" value="LAGLIDADG_WhiA"/>
    <property type="match status" value="1"/>
</dbReference>
<dbReference type="Pfam" id="PF10298">
    <property type="entry name" value="WhiA_N"/>
    <property type="match status" value="1"/>
</dbReference>
<dbReference type="SUPFAM" id="SSF55608">
    <property type="entry name" value="Homing endonucleases"/>
    <property type="match status" value="1"/>
</dbReference>
<comment type="function">
    <text evidence="1">Involved in cell division and chromosome segregation.</text>
</comment>
<comment type="similarity">
    <text evidence="1">Belongs to the WhiA family.</text>
</comment>